<proteinExistence type="inferred from homology"/>
<reference key="1">
    <citation type="journal article" date="2003" name="Genome Res.">
        <title>Comparative complete genome sequence analysis of the amino acid replacements responsible for the thermostability of Corynebacterium efficiens.</title>
        <authorList>
            <person name="Nishio Y."/>
            <person name="Nakamura Y."/>
            <person name="Kawarabayasi Y."/>
            <person name="Usuda Y."/>
            <person name="Kimura E."/>
            <person name="Sugimoto S."/>
            <person name="Matsui K."/>
            <person name="Yamagishi A."/>
            <person name="Kikuchi H."/>
            <person name="Ikeo K."/>
            <person name="Gojobori T."/>
        </authorList>
    </citation>
    <scope>NUCLEOTIDE SEQUENCE [LARGE SCALE GENOMIC DNA]</scope>
    <source>
        <strain>DSM 44549 / YS-314 / AJ 12310 / JCM 11189 / NBRC 100395</strain>
    </source>
</reference>
<comment type="function">
    <text evidence="1">Involved in urease metallocenter assembly. Binds nickel. Probably functions as a nickel donor during metallocenter assembly.</text>
</comment>
<comment type="subcellular location">
    <subcellularLocation>
        <location evidence="1">Cytoplasm</location>
    </subcellularLocation>
</comment>
<comment type="similarity">
    <text evidence="1">Belongs to the UreE family.</text>
</comment>
<keyword id="KW-0143">Chaperone</keyword>
<keyword id="KW-0963">Cytoplasm</keyword>
<keyword id="KW-0533">Nickel</keyword>
<keyword id="KW-0996">Nickel insertion</keyword>
<keyword id="KW-1185">Reference proteome</keyword>
<gene>
    <name evidence="1" type="primary">ureE</name>
    <name type="ordered locus">CE0996</name>
</gene>
<protein>
    <recommendedName>
        <fullName evidence="1">Urease accessory protein UreE</fullName>
    </recommendedName>
</protein>
<feature type="chain" id="PRO_0000223410" description="Urease accessory protein UreE">
    <location>
        <begin position="1"/>
        <end position="149"/>
    </location>
</feature>
<name>UREE_COREF</name>
<sequence length="149" mass="16823">MIITEIIGNIHEQPELRTHHAETITLVDDALTKRIQRLVSDHGSELGLRLPSGHPPLRDGDVLHSDGENSILIAVAPTDVLMIRPGTLRDMAFVAHSLGNRHLPAQFDGDVMIVRYDNTVVDFLEHYGVRYERRSTVMPTPFRHSEHTH</sequence>
<evidence type="ECO:0000255" key="1">
    <source>
        <dbReference type="HAMAP-Rule" id="MF_00822"/>
    </source>
</evidence>
<dbReference type="EMBL" id="BA000035">
    <property type="protein sequence ID" value="BAC17806.1"/>
    <property type="molecule type" value="Genomic_DNA"/>
</dbReference>
<dbReference type="RefSeq" id="WP_006770039.1">
    <property type="nucleotide sequence ID" value="NC_004369.1"/>
</dbReference>
<dbReference type="SMR" id="Q8FQX1"/>
<dbReference type="STRING" id="196164.gene:10741402"/>
<dbReference type="KEGG" id="cef:CE0996"/>
<dbReference type="eggNOG" id="COG2371">
    <property type="taxonomic scope" value="Bacteria"/>
</dbReference>
<dbReference type="HOGENOM" id="CLU_093757_3_1_11"/>
<dbReference type="OrthoDB" id="9810882at2"/>
<dbReference type="Proteomes" id="UP000001409">
    <property type="component" value="Chromosome"/>
</dbReference>
<dbReference type="GO" id="GO:0005737">
    <property type="term" value="C:cytoplasm"/>
    <property type="evidence" value="ECO:0007669"/>
    <property type="project" value="UniProtKB-SubCell"/>
</dbReference>
<dbReference type="GO" id="GO:0016151">
    <property type="term" value="F:nickel cation binding"/>
    <property type="evidence" value="ECO:0007669"/>
    <property type="project" value="UniProtKB-UniRule"/>
</dbReference>
<dbReference type="GO" id="GO:0051082">
    <property type="term" value="F:unfolded protein binding"/>
    <property type="evidence" value="ECO:0007669"/>
    <property type="project" value="UniProtKB-UniRule"/>
</dbReference>
<dbReference type="GO" id="GO:0006457">
    <property type="term" value="P:protein folding"/>
    <property type="evidence" value="ECO:0007669"/>
    <property type="project" value="InterPro"/>
</dbReference>
<dbReference type="GO" id="GO:0065003">
    <property type="term" value="P:protein-containing complex assembly"/>
    <property type="evidence" value="ECO:0007669"/>
    <property type="project" value="InterPro"/>
</dbReference>
<dbReference type="GO" id="GO:0019627">
    <property type="term" value="P:urea metabolic process"/>
    <property type="evidence" value="ECO:0007669"/>
    <property type="project" value="InterPro"/>
</dbReference>
<dbReference type="CDD" id="cd00571">
    <property type="entry name" value="UreE"/>
    <property type="match status" value="1"/>
</dbReference>
<dbReference type="Gene3D" id="2.60.260.20">
    <property type="entry name" value="Urease metallochaperone UreE, N-terminal domain"/>
    <property type="match status" value="1"/>
</dbReference>
<dbReference type="Gene3D" id="3.30.70.790">
    <property type="entry name" value="UreE, C-terminal domain"/>
    <property type="match status" value="1"/>
</dbReference>
<dbReference type="HAMAP" id="MF_00822">
    <property type="entry name" value="UreE"/>
    <property type="match status" value="1"/>
</dbReference>
<dbReference type="InterPro" id="IPR012406">
    <property type="entry name" value="UreE"/>
</dbReference>
<dbReference type="InterPro" id="IPR007864">
    <property type="entry name" value="UreE_C_dom"/>
</dbReference>
<dbReference type="InterPro" id="IPR004029">
    <property type="entry name" value="UreE_N"/>
</dbReference>
<dbReference type="InterPro" id="IPR036118">
    <property type="entry name" value="UreE_N_sf"/>
</dbReference>
<dbReference type="NCBIfam" id="NF009757">
    <property type="entry name" value="PRK13261.2-3"/>
    <property type="match status" value="1"/>
</dbReference>
<dbReference type="Pfam" id="PF05194">
    <property type="entry name" value="UreE_C"/>
    <property type="match status" value="1"/>
</dbReference>
<dbReference type="Pfam" id="PF02814">
    <property type="entry name" value="UreE_N"/>
    <property type="match status" value="1"/>
</dbReference>
<dbReference type="PIRSF" id="PIRSF036402">
    <property type="entry name" value="Ureas_acces_UreE"/>
    <property type="match status" value="1"/>
</dbReference>
<dbReference type="SMART" id="SM00988">
    <property type="entry name" value="UreE_N"/>
    <property type="match status" value="1"/>
</dbReference>
<dbReference type="SUPFAM" id="SSF69737">
    <property type="entry name" value="Urease metallochaperone UreE, C-terminal domain"/>
    <property type="match status" value="1"/>
</dbReference>
<dbReference type="SUPFAM" id="SSF69287">
    <property type="entry name" value="Urease metallochaperone UreE, N-terminal domain"/>
    <property type="match status" value="1"/>
</dbReference>
<accession>Q8FQX1</accession>
<organism>
    <name type="scientific">Corynebacterium efficiens (strain DSM 44549 / YS-314 / AJ 12310 / JCM 11189 / NBRC 100395)</name>
    <dbReference type="NCBI Taxonomy" id="196164"/>
    <lineage>
        <taxon>Bacteria</taxon>
        <taxon>Bacillati</taxon>
        <taxon>Actinomycetota</taxon>
        <taxon>Actinomycetes</taxon>
        <taxon>Mycobacteriales</taxon>
        <taxon>Corynebacteriaceae</taxon>
        <taxon>Corynebacterium</taxon>
    </lineage>
</organism>